<name>EPMA_BUCA5</name>
<protein>
    <recommendedName>
        <fullName evidence="1">Elongation factor P--(R)-beta-lysine ligase</fullName>
        <shortName evidence="1">EF-P--(R)-beta-lysine ligase</shortName>
        <ecNumber evidence="1">6.3.2.-</ecNumber>
    </recommendedName>
    <alternativeName>
        <fullName evidence="1">EF-P post-translational modification enzyme A</fullName>
    </alternativeName>
    <alternativeName>
        <fullName evidence="1">EF-P-lysine lysyltransferase</fullName>
    </alternativeName>
</protein>
<evidence type="ECO:0000255" key="1">
    <source>
        <dbReference type="HAMAP-Rule" id="MF_00174"/>
    </source>
</evidence>
<proteinExistence type="inferred from homology"/>
<keyword id="KW-0067">ATP-binding</keyword>
<keyword id="KW-0436">Ligase</keyword>
<keyword id="KW-0547">Nucleotide-binding</keyword>
<gene>
    <name evidence="1" type="primary">epmA</name>
    <name type="synonym">yjeA</name>
    <name type="ordered locus">BUAP5A_575</name>
</gene>
<reference key="1">
    <citation type="journal article" date="2009" name="Science">
        <title>The dynamics and time scale of ongoing genomic erosion in symbiotic bacteria.</title>
        <authorList>
            <person name="Moran N.A."/>
            <person name="McLaughlin H.J."/>
            <person name="Sorek R."/>
        </authorList>
    </citation>
    <scope>NUCLEOTIDE SEQUENCE [LARGE SCALE GENOMIC DNA]</scope>
    <source>
        <strain>5A</strain>
    </source>
</reference>
<organism>
    <name type="scientific">Buchnera aphidicola subsp. Acyrthosiphon pisum (strain 5A)</name>
    <dbReference type="NCBI Taxonomy" id="563178"/>
    <lineage>
        <taxon>Bacteria</taxon>
        <taxon>Pseudomonadati</taxon>
        <taxon>Pseudomonadota</taxon>
        <taxon>Gammaproteobacteria</taxon>
        <taxon>Enterobacterales</taxon>
        <taxon>Erwiniaceae</taxon>
        <taxon>Buchnera</taxon>
    </lineage>
</organism>
<dbReference type="EC" id="6.3.2.-" evidence="1"/>
<dbReference type="EMBL" id="CP001161">
    <property type="protein sequence ID" value="ACL30921.1"/>
    <property type="molecule type" value="Genomic_DNA"/>
</dbReference>
<dbReference type="RefSeq" id="WP_012619396.1">
    <property type="nucleotide sequence ID" value="NC_011833.1"/>
</dbReference>
<dbReference type="SMR" id="B8D8E5"/>
<dbReference type="KEGG" id="bap:BUAP5A_575"/>
<dbReference type="HOGENOM" id="CLU_008255_1_1_6"/>
<dbReference type="OrthoDB" id="9762036at2"/>
<dbReference type="Proteomes" id="UP000006904">
    <property type="component" value="Chromosome"/>
</dbReference>
<dbReference type="GO" id="GO:0005829">
    <property type="term" value="C:cytosol"/>
    <property type="evidence" value="ECO:0007669"/>
    <property type="project" value="TreeGrafter"/>
</dbReference>
<dbReference type="GO" id="GO:0016880">
    <property type="term" value="F:acid-ammonia (or amide) ligase activity"/>
    <property type="evidence" value="ECO:0007669"/>
    <property type="project" value="UniProtKB-UniRule"/>
</dbReference>
<dbReference type="GO" id="GO:0005524">
    <property type="term" value="F:ATP binding"/>
    <property type="evidence" value="ECO:0007669"/>
    <property type="project" value="UniProtKB-UniRule"/>
</dbReference>
<dbReference type="GO" id="GO:0004824">
    <property type="term" value="F:lysine-tRNA ligase activity"/>
    <property type="evidence" value="ECO:0007669"/>
    <property type="project" value="InterPro"/>
</dbReference>
<dbReference type="GO" id="GO:0000049">
    <property type="term" value="F:tRNA binding"/>
    <property type="evidence" value="ECO:0007669"/>
    <property type="project" value="TreeGrafter"/>
</dbReference>
<dbReference type="GO" id="GO:0006430">
    <property type="term" value="P:lysyl-tRNA aminoacylation"/>
    <property type="evidence" value="ECO:0007669"/>
    <property type="project" value="InterPro"/>
</dbReference>
<dbReference type="FunFam" id="3.30.930.10:FF:000017">
    <property type="entry name" value="Elongation factor P--(R)-beta-lysine ligase"/>
    <property type="match status" value="1"/>
</dbReference>
<dbReference type="Gene3D" id="3.30.930.10">
    <property type="entry name" value="Bira Bifunctional Protein, Domain 2"/>
    <property type="match status" value="1"/>
</dbReference>
<dbReference type="HAMAP" id="MF_00174">
    <property type="entry name" value="EF_P_modif_A"/>
    <property type="match status" value="1"/>
</dbReference>
<dbReference type="InterPro" id="IPR004364">
    <property type="entry name" value="Aa-tRNA-synt_II"/>
</dbReference>
<dbReference type="InterPro" id="IPR006195">
    <property type="entry name" value="aa-tRNA-synth_II"/>
</dbReference>
<dbReference type="InterPro" id="IPR045864">
    <property type="entry name" value="aa-tRNA-synth_II/BPL/LPL"/>
</dbReference>
<dbReference type="InterPro" id="IPR004525">
    <property type="entry name" value="EpmA"/>
</dbReference>
<dbReference type="InterPro" id="IPR018149">
    <property type="entry name" value="Lys-tRNA-synth_II_C"/>
</dbReference>
<dbReference type="NCBIfam" id="TIGR00462">
    <property type="entry name" value="genX"/>
    <property type="match status" value="1"/>
</dbReference>
<dbReference type="NCBIfam" id="NF006828">
    <property type="entry name" value="PRK09350.1"/>
    <property type="match status" value="1"/>
</dbReference>
<dbReference type="PANTHER" id="PTHR42918:SF6">
    <property type="entry name" value="ELONGATION FACTOR P--(R)-BETA-LYSINE LIGASE"/>
    <property type="match status" value="1"/>
</dbReference>
<dbReference type="PANTHER" id="PTHR42918">
    <property type="entry name" value="LYSYL-TRNA SYNTHETASE"/>
    <property type="match status" value="1"/>
</dbReference>
<dbReference type="Pfam" id="PF00152">
    <property type="entry name" value="tRNA-synt_2"/>
    <property type="match status" value="1"/>
</dbReference>
<dbReference type="PRINTS" id="PR00982">
    <property type="entry name" value="TRNASYNTHLYS"/>
</dbReference>
<dbReference type="SUPFAM" id="SSF55681">
    <property type="entry name" value="Class II aaRS and biotin synthetases"/>
    <property type="match status" value="1"/>
</dbReference>
<dbReference type="PROSITE" id="PS50862">
    <property type="entry name" value="AA_TRNA_LIGASE_II"/>
    <property type="match status" value="1"/>
</dbReference>
<sequence>MKKKIWKSSASIEDLIKRSNIISNIRLFFSKKNILEVETPILSRSTVTDVHLTSFETNYISSDNIDELKLWLTTSPEYHMKRLLASESGSIYQICHSFRNKELGRYHNPEFTMLEWYQPFCSMKKFIKEIDIFLQIILKCNKSDKVSYQDLFIDFLKIDPLCANLLELHQISKKLKLDHLTHSENNLNKLIQLLFTLKIEPNIGKEKPLFVYHFPAEQASLAAINLKDPRISERFEIFFKGIELGNGFYELIDVNEQKKRFIRDNKERRSMNLPIRKIDNFFLSALSYGLPPCSGVAIGLDRLIMLILNKKSIHEVIAFPVDRC</sequence>
<feature type="chain" id="PRO_1000199252" description="Elongation factor P--(R)-beta-lysine ligase">
    <location>
        <begin position="1"/>
        <end position="324"/>
    </location>
</feature>
<feature type="binding site" evidence="1">
    <location>
        <begin position="75"/>
        <end position="77"/>
    </location>
    <ligand>
        <name>substrate</name>
    </ligand>
</feature>
<feature type="binding site" evidence="1">
    <location>
        <begin position="99"/>
        <end position="101"/>
    </location>
    <ligand>
        <name>ATP</name>
        <dbReference type="ChEBI" id="CHEBI:30616"/>
    </ligand>
</feature>
<feature type="binding site" evidence="1">
    <location>
        <position position="108"/>
    </location>
    <ligand>
        <name>ATP</name>
        <dbReference type="ChEBI" id="CHEBI:30616"/>
    </ligand>
</feature>
<feature type="binding site" evidence="1">
    <location>
        <position position="117"/>
    </location>
    <ligand>
        <name>substrate</name>
    </ligand>
</feature>
<feature type="binding site" evidence="1">
    <location>
        <begin position="243"/>
        <end position="244"/>
    </location>
    <ligand>
        <name>ATP</name>
        <dbReference type="ChEBI" id="CHEBI:30616"/>
    </ligand>
</feature>
<feature type="binding site" evidence="1">
    <location>
        <position position="250"/>
    </location>
    <ligand>
        <name>substrate</name>
    </ligand>
</feature>
<feature type="binding site" evidence="1">
    <location>
        <position position="299"/>
    </location>
    <ligand>
        <name>ATP</name>
        <dbReference type="ChEBI" id="CHEBI:30616"/>
    </ligand>
</feature>
<accession>B8D8E5</accession>
<comment type="function">
    <text evidence="1">With EpmB is involved in the beta-lysylation step of the post-translational modification of translation elongation factor P (EF-P). Catalyzes the ATP-dependent activation of (R)-beta-lysine produced by EpmB, forming a lysyl-adenylate, from which the beta-lysyl moiety is then transferred to the epsilon-amino group of a conserved specific lysine residue in EF-P.</text>
</comment>
<comment type="catalytic activity">
    <reaction evidence="1">
        <text>D-beta-lysine + L-lysyl-[protein] + ATP = N(6)-((3R)-3,6-diaminohexanoyl)-L-lysyl-[protein] + AMP + diphosphate + H(+)</text>
        <dbReference type="Rhea" id="RHEA:83435"/>
        <dbReference type="Rhea" id="RHEA-COMP:9752"/>
        <dbReference type="Rhea" id="RHEA-COMP:20131"/>
        <dbReference type="ChEBI" id="CHEBI:15378"/>
        <dbReference type="ChEBI" id="CHEBI:29969"/>
        <dbReference type="ChEBI" id="CHEBI:30616"/>
        <dbReference type="ChEBI" id="CHEBI:33019"/>
        <dbReference type="ChEBI" id="CHEBI:84138"/>
        <dbReference type="ChEBI" id="CHEBI:156053"/>
        <dbReference type="ChEBI" id="CHEBI:456215"/>
    </reaction>
    <physiologicalReaction direction="left-to-right" evidence="1">
        <dbReference type="Rhea" id="RHEA:83436"/>
    </physiologicalReaction>
</comment>
<comment type="subunit">
    <text evidence="1">Homodimer.</text>
</comment>
<comment type="similarity">
    <text evidence="1">Belongs to the class-II aminoacyl-tRNA synthetase family. EpmA subfamily.</text>
</comment>